<name>YDGH_BACSU</name>
<sequence>MRAIIKFKWAIAAIVLALTVVLSLFSPNLTELANQKGQAQLPADAVSERANAILKQAGEDNNSISVVFTLDNAIKKETENQLRIIIDKIKKIDGVEEVTSPLSAEKEVKDQLMSKDKKTVLMPVTITGSDKKAEKIADEIYQIVPDDLTAYITGASLINQDFAHSSEEGLKKTEVITVCLIIGLLLIVFRSVVTPFIPIVVVGFSYLISQSILGILVYNVDFPISTFTQTFLVAILFGIGTDYCILLLTRFREELANGHDKKEAALIAYRTGGKTLFISGFAVLIGFSALGFAKFAIFQSAVGVAVGVGILMIILYTLLPLFMVTLGEKLFWPSKKVLSHSDNKLWAFLGRHSVARPFLFIVITVVITLPFILTYDDQISFDSTAEISSDYKSIKALEAIKDGFGEGKAFPINVVVKGDKDLTTADTIPYLGNISKAIEKVDHVDSVMTITQPTGKKIKDLYIDNQLGSVSDGLDKTVKGIADVQSGLTDIENGLNQMAGQTGSASNGGSGGSLGDAADGLGKINQQLQLVSKQISQTGNTAQTVQQLTAISGQLGQIQTGLEQANQQLSGQQAQAGTLTESLKKLSEGVKSANEGLTKVSDGITASSDILEDMSKSPTVRDTGIFIPDQVMKDKDFKKSIDQYSFADGKGVQLSVVLDSNPYSEQAITTINQIKKAVANEVDGTPLENAQIVYGGVTSMNADLKELSTTDFSRTMVIMIIGLFIVLTILFRSMIMPIYMIASLLLTYYTSISITELIFVNGLGNAGVSWAVPFFSFVILIALGVDYSIFLLDRFKEEVHLGIEQGVVRSMSKMGSVIITAAIILAGTFAAMMPSGVNTLMQVASVIIIGLLLYGLVILPLFIPAIIATFGEGNWWPFGRKKGKE</sequence>
<protein>
    <recommendedName>
        <fullName>Putative membrane protein YdgH</fullName>
    </recommendedName>
</protein>
<comment type="interaction">
    <interactant intactId="EBI-5242915">
        <id>P96706</id>
    </interactant>
    <interactant intactId="EBI-5242442">
        <id>O31501</id>
        <label>swrC</label>
    </interactant>
    <organismsDiffer>false</organismsDiffer>
    <experiments>3</experiments>
</comment>
<comment type="interaction">
    <interactant intactId="EBI-5242915">
        <id>P96706</id>
    </interactant>
    <interactant intactId="EBI-5242682">
        <id>P45920</id>
        <label>yqbD</label>
    </interactant>
    <organismsDiffer>false</organismsDiffer>
    <experiments>3</experiments>
</comment>
<comment type="subcellular location">
    <subcellularLocation>
        <location evidence="3">Cell membrane</location>
        <topology evidence="3">Multi-pass membrane protein</topology>
    </subcellularLocation>
</comment>
<comment type="similarity">
    <text evidence="3">Belongs to the resistance-nodulation-cell division (RND) (TC 2.A.6) family. MmpL subfamily.</text>
</comment>
<accession>P96706</accession>
<proteinExistence type="evidence at protein level"/>
<feature type="chain" id="PRO_0000103586" description="Putative membrane protein YdgH">
    <location>
        <begin position="1"/>
        <end position="885"/>
    </location>
</feature>
<feature type="transmembrane region" description="Helical" evidence="1">
    <location>
        <begin position="9"/>
        <end position="29"/>
    </location>
</feature>
<feature type="transmembrane region" description="Helical" evidence="1">
    <location>
        <begin position="181"/>
        <end position="201"/>
    </location>
</feature>
<feature type="transmembrane region" description="Helical" evidence="1">
    <location>
        <begin position="202"/>
        <end position="222"/>
    </location>
</feature>
<feature type="transmembrane region" description="Helical" evidence="1">
    <location>
        <begin position="227"/>
        <end position="247"/>
    </location>
</feature>
<feature type="transmembrane region" description="Helical" evidence="1">
    <location>
        <begin position="278"/>
        <end position="298"/>
    </location>
</feature>
<feature type="transmembrane region" description="Helical" evidence="1">
    <location>
        <begin position="304"/>
        <end position="324"/>
    </location>
</feature>
<feature type="transmembrane region" description="Helical" evidence="1">
    <location>
        <begin position="354"/>
        <end position="374"/>
    </location>
</feature>
<feature type="transmembrane region" description="Helical" evidence="1">
    <location>
        <begin position="716"/>
        <end position="736"/>
    </location>
</feature>
<feature type="transmembrane region" description="Helical" evidence="1">
    <location>
        <begin position="740"/>
        <end position="760"/>
    </location>
</feature>
<feature type="transmembrane region" description="Helical" evidence="1">
    <location>
        <begin position="772"/>
        <end position="792"/>
    </location>
</feature>
<feature type="transmembrane region" description="Helical" evidence="1">
    <location>
        <begin position="817"/>
        <end position="837"/>
    </location>
</feature>
<feature type="transmembrane region" description="Helical" evidence="1">
    <location>
        <begin position="847"/>
        <end position="867"/>
    </location>
</feature>
<feature type="region of interest" description="Disordered" evidence="2">
    <location>
        <begin position="498"/>
        <end position="518"/>
    </location>
</feature>
<dbReference type="EMBL" id="AB001488">
    <property type="protein sequence ID" value="BAA19398.1"/>
    <property type="molecule type" value="Genomic_DNA"/>
</dbReference>
<dbReference type="EMBL" id="AL009126">
    <property type="protein sequence ID" value="CAB12372.1"/>
    <property type="molecule type" value="Genomic_DNA"/>
</dbReference>
<dbReference type="PIR" id="B69783">
    <property type="entry name" value="B69783"/>
</dbReference>
<dbReference type="RefSeq" id="NP_388446.1">
    <property type="nucleotide sequence ID" value="NC_000964.3"/>
</dbReference>
<dbReference type="RefSeq" id="WP_003242658.1">
    <property type="nucleotide sequence ID" value="NZ_OZ025638.1"/>
</dbReference>
<dbReference type="SMR" id="P96706"/>
<dbReference type="FunCoup" id="P96706">
    <property type="interactions" value="99"/>
</dbReference>
<dbReference type="IntAct" id="P96706">
    <property type="interactions" value="44"/>
</dbReference>
<dbReference type="STRING" id="224308.BSU05650"/>
<dbReference type="PaxDb" id="224308-BSU05650"/>
<dbReference type="EnsemblBacteria" id="CAB12372">
    <property type="protein sequence ID" value="CAB12372"/>
    <property type="gene ID" value="BSU_05650"/>
</dbReference>
<dbReference type="GeneID" id="938043"/>
<dbReference type="KEGG" id="bsu:BSU05650"/>
<dbReference type="PATRIC" id="fig|224308.179.peg.608"/>
<dbReference type="eggNOG" id="COG1033">
    <property type="taxonomic scope" value="Bacteria"/>
</dbReference>
<dbReference type="eggNOG" id="COG2409">
    <property type="taxonomic scope" value="Bacteria"/>
</dbReference>
<dbReference type="InParanoid" id="P96706"/>
<dbReference type="OrthoDB" id="9782006at2"/>
<dbReference type="PhylomeDB" id="P96706"/>
<dbReference type="BioCyc" id="BSUB:BSU05650-MONOMER"/>
<dbReference type="Proteomes" id="UP000001570">
    <property type="component" value="Chromosome"/>
</dbReference>
<dbReference type="GO" id="GO:0005886">
    <property type="term" value="C:plasma membrane"/>
    <property type="evidence" value="ECO:0007669"/>
    <property type="project" value="UniProtKB-SubCell"/>
</dbReference>
<dbReference type="Gene3D" id="1.20.1640.10">
    <property type="entry name" value="Multidrug efflux transporter AcrB transmembrane domain"/>
    <property type="match status" value="2"/>
</dbReference>
<dbReference type="InterPro" id="IPR004869">
    <property type="entry name" value="MMPL_dom"/>
</dbReference>
<dbReference type="InterPro" id="IPR050545">
    <property type="entry name" value="Mycobact_MmpL"/>
</dbReference>
<dbReference type="InterPro" id="IPR000731">
    <property type="entry name" value="SSD"/>
</dbReference>
<dbReference type="PANTHER" id="PTHR33406">
    <property type="entry name" value="MEMBRANE PROTEIN MJ1562-RELATED"/>
    <property type="match status" value="1"/>
</dbReference>
<dbReference type="PANTHER" id="PTHR33406:SF6">
    <property type="entry name" value="MEMBRANE PROTEIN YDGH-RELATED"/>
    <property type="match status" value="1"/>
</dbReference>
<dbReference type="Pfam" id="PF03176">
    <property type="entry name" value="MMPL"/>
    <property type="match status" value="2"/>
</dbReference>
<dbReference type="SUPFAM" id="SSF82866">
    <property type="entry name" value="Multidrug efflux transporter AcrB transmembrane domain"/>
    <property type="match status" value="2"/>
</dbReference>
<dbReference type="PROSITE" id="PS50156">
    <property type="entry name" value="SSD"/>
    <property type="match status" value="1"/>
</dbReference>
<evidence type="ECO:0000255" key="1"/>
<evidence type="ECO:0000256" key="2">
    <source>
        <dbReference type="SAM" id="MobiDB-lite"/>
    </source>
</evidence>
<evidence type="ECO:0000305" key="3"/>
<reference key="1">
    <citation type="submission" date="1997-03" db="EMBL/GenBank/DDBJ databases">
        <title>A 148 kbp sequence of the region between 35 and 47 degree of the Bacillus subtilis genome.</title>
        <authorList>
            <person name="Kasahara Y."/>
            <person name="Nakai S."/>
            <person name="Lee S."/>
            <person name="Sadaie Y."/>
            <person name="Ogasawara N."/>
        </authorList>
    </citation>
    <scope>NUCLEOTIDE SEQUENCE [GENOMIC DNA]</scope>
    <source>
        <strain>168</strain>
    </source>
</reference>
<reference key="2">
    <citation type="journal article" date="1997" name="Nature">
        <title>The complete genome sequence of the Gram-positive bacterium Bacillus subtilis.</title>
        <authorList>
            <person name="Kunst F."/>
            <person name="Ogasawara N."/>
            <person name="Moszer I."/>
            <person name="Albertini A.M."/>
            <person name="Alloni G."/>
            <person name="Azevedo V."/>
            <person name="Bertero M.G."/>
            <person name="Bessieres P."/>
            <person name="Bolotin A."/>
            <person name="Borchert S."/>
            <person name="Borriss R."/>
            <person name="Boursier L."/>
            <person name="Brans A."/>
            <person name="Braun M."/>
            <person name="Brignell S.C."/>
            <person name="Bron S."/>
            <person name="Brouillet S."/>
            <person name="Bruschi C.V."/>
            <person name="Caldwell B."/>
            <person name="Capuano V."/>
            <person name="Carter N.M."/>
            <person name="Choi S.-K."/>
            <person name="Codani J.-J."/>
            <person name="Connerton I.F."/>
            <person name="Cummings N.J."/>
            <person name="Daniel R.A."/>
            <person name="Denizot F."/>
            <person name="Devine K.M."/>
            <person name="Duesterhoeft A."/>
            <person name="Ehrlich S.D."/>
            <person name="Emmerson P.T."/>
            <person name="Entian K.-D."/>
            <person name="Errington J."/>
            <person name="Fabret C."/>
            <person name="Ferrari E."/>
            <person name="Foulger D."/>
            <person name="Fritz C."/>
            <person name="Fujita M."/>
            <person name="Fujita Y."/>
            <person name="Fuma S."/>
            <person name="Galizzi A."/>
            <person name="Galleron N."/>
            <person name="Ghim S.-Y."/>
            <person name="Glaser P."/>
            <person name="Goffeau A."/>
            <person name="Golightly E.J."/>
            <person name="Grandi G."/>
            <person name="Guiseppi G."/>
            <person name="Guy B.J."/>
            <person name="Haga K."/>
            <person name="Haiech J."/>
            <person name="Harwood C.R."/>
            <person name="Henaut A."/>
            <person name="Hilbert H."/>
            <person name="Holsappel S."/>
            <person name="Hosono S."/>
            <person name="Hullo M.-F."/>
            <person name="Itaya M."/>
            <person name="Jones L.-M."/>
            <person name="Joris B."/>
            <person name="Karamata D."/>
            <person name="Kasahara Y."/>
            <person name="Klaerr-Blanchard M."/>
            <person name="Klein C."/>
            <person name="Kobayashi Y."/>
            <person name="Koetter P."/>
            <person name="Koningstein G."/>
            <person name="Krogh S."/>
            <person name="Kumano M."/>
            <person name="Kurita K."/>
            <person name="Lapidus A."/>
            <person name="Lardinois S."/>
            <person name="Lauber J."/>
            <person name="Lazarevic V."/>
            <person name="Lee S.-M."/>
            <person name="Levine A."/>
            <person name="Liu H."/>
            <person name="Masuda S."/>
            <person name="Mauel C."/>
            <person name="Medigue C."/>
            <person name="Medina N."/>
            <person name="Mellado R.P."/>
            <person name="Mizuno M."/>
            <person name="Moestl D."/>
            <person name="Nakai S."/>
            <person name="Noback M."/>
            <person name="Noone D."/>
            <person name="O'Reilly M."/>
            <person name="Ogawa K."/>
            <person name="Ogiwara A."/>
            <person name="Oudega B."/>
            <person name="Park S.-H."/>
            <person name="Parro V."/>
            <person name="Pohl T.M."/>
            <person name="Portetelle D."/>
            <person name="Porwollik S."/>
            <person name="Prescott A.M."/>
            <person name="Presecan E."/>
            <person name="Pujic P."/>
            <person name="Purnelle B."/>
            <person name="Rapoport G."/>
            <person name="Rey M."/>
            <person name="Reynolds S."/>
            <person name="Rieger M."/>
            <person name="Rivolta C."/>
            <person name="Rocha E."/>
            <person name="Roche B."/>
            <person name="Rose M."/>
            <person name="Sadaie Y."/>
            <person name="Sato T."/>
            <person name="Scanlan E."/>
            <person name="Schleich S."/>
            <person name="Schroeter R."/>
            <person name="Scoffone F."/>
            <person name="Sekiguchi J."/>
            <person name="Sekowska A."/>
            <person name="Seror S.J."/>
            <person name="Serror P."/>
            <person name="Shin B.-S."/>
            <person name="Soldo B."/>
            <person name="Sorokin A."/>
            <person name="Tacconi E."/>
            <person name="Takagi T."/>
            <person name="Takahashi H."/>
            <person name="Takemaru K."/>
            <person name="Takeuchi M."/>
            <person name="Tamakoshi A."/>
            <person name="Tanaka T."/>
            <person name="Terpstra P."/>
            <person name="Tognoni A."/>
            <person name="Tosato V."/>
            <person name="Uchiyama S."/>
            <person name="Vandenbol M."/>
            <person name="Vannier F."/>
            <person name="Vassarotti A."/>
            <person name="Viari A."/>
            <person name="Wambutt R."/>
            <person name="Wedler E."/>
            <person name="Wedler H."/>
            <person name="Weitzenegger T."/>
            <person name="Winters P."/>
            <person name="Wipat A."/>
            <person name="Yamamoto H."/>
            <person name="Yamane K."/>
            <person name="Yasumoto K."/>
            <person name="Yata K."/>
            <person name="Yoshida K."/>
            <person name="Yoshikawa H.-F."/>
            <person name="Zumstein E."/>
            <person name="Yoshikawa H."/>
            <person name="Danchin A."/>
        </authorList>
    </citation>
    <scope>NUCLEOTIDE SEQUENCE [LARGE SCALE GENOMIC DNA]</scope>
    <source>
        <strain>168</strain>
    </source>
</reference>
<organism>
    <name type="scientific">Bacillus subtilis (strain 168)</name>
    <dbReference type="NCBI Taxonomy" id="224308"/>
    <lineage>
        <taxon>Bacteria</taxon>
        <taxon>Bacillati</taxon>
        <taxon>Bacillota</taxon>
        <taxon>Bacilli</taxon>
        <taxon>Bacillales</taxon>
        <taxon>Bacillaceae</taxon>
        <taxon>Bacillus</taxon>
    </lineage>
</organism>
<gene>
    <name type="primary">ydgH</name>
    <name type="ordered locus">BSU05650</name>
</gene>
<keyword id="KW-1003">Cell membrane</keyword>
<keyword id="KW-0472">Membrane</keyword>
<keyword id="KW-1185">Reference proteome</keyword>
<keyword id="KW-0812">Transmembrane</keyword>
<keyword id="KW-1133">Transmembrane helix</keyword>